<sequence length="616" mass="66432">MRLLPSSCAGALSLLCSLAIAAPTELKARDLSSFIASERAIALQGALNNIGPDGSAVPGAGAGFVVASPSKANPDYFYTWSRDSALTLKMIIDEFILGNTTLQTIIEQYIHAQAVLQTVSNPSGTFLPDGVGLGEPKFMVDGTRFNGPWGRPQRDGPALRAIALMTYSNWLIKNGQFAEAKTKIWPIIANDLSYVGQYWNQSGFDLWEETYASSFFTIQNQHRALVEGAQLAHDLGVTCTGCDQAPEVLCFLQSFWNGKYIVSNINVNNGRTGLDGNSILGAISTFDIDAYCDSPTLQPCHSQSLANFKVLTDTFRNLYTINAGIPEGQGVAVGRYAEDVYMGGNPWYLITTAAAEFLYDAVAQWKARHVLTVDETSLAFFKDIYPEVTVREYKSGNANSPFAQIMDAVTAYADSYVAIAEKYIPSNGSLSEQFNRDTGTPLSAIDLTWSYAAFITMSQRRAGQYPSSWGSRNALPPPTTCSASSTPGIYTPATAAGAPNVTSSCQVSITFNINATTYYGENLYVIGNSSDLGAWNIADAYPLSASAYTQDRPLWSAAIPLNAGEVISYQYVRQEDCDQPYIYETVNRTLTVPACGGAAVTTDDAWMGPVGSSGNC</sequence>
<feature type="signal peptide">
    <location>
        <begin position="1"/>
        <end position="29"/>
    </location>
</feature>
<feature type="chain" id="PRO_0000001471" description="Glucoamylase P">
    <location>
        <begin position="30"/>
        <end position="616"/>
    </location>
</feature>
<feature type="domain" description="CBM20" evidence="3">
    <location>
        <begin position="501"/>
        <end position="608"/>
    </location>
</feature>
<feature type="active site" description="Proton acceptor" evidence="1">
    <location>
        <position position="205"/>
    </location>
</feature>
<feature type="active site" description="Proton donor" evidence="1">
    <location>
        <position position="208"/>
    </location>
</feature>
<feature type="binding site" evidence="1">
    <location>
        <position position="149"/>
    </location>
    <ligand>
        <name>substrate</name>
    </ligand>
</feature>
<feature type="glycosylation site" description="N-linked (GlcNAc...) asparagine" evidence="2">
    <location>
        <position position="200"/>
    </location>
</feature>
<feature type="glycosylation site" description="N-linked (GlcNAc...) asparagine" evidence="2">
    <location>
        <position position="427"/>
    </location>
</feature>
<proteinExistence type="evidence at protein level"/>
<name>AMYG_AMORE</name>
<accession>Q03045</accession>
<keyword id="KW-0002">3D-structure</keyword>
<keyword id="KW-0119">Carbohydrate metabolism</keyword>
<keyword id="KW-0903">Direct protein sequencing</keyword>
<keyword id="KW-0325">Glycoprotein</keyword>
<keyword id="KW-0326">Glycosidase</keyword>
<keyword id="KW-0378">Hydrolase</keyword>
<keyword id="KW-0624">Polysaccharide degradation</keyword>
<keyword id="KW-0964">Secreted</keyword>
<keyword id="KW-0732">Signal</keyword>
<organism>
    <name type="scientific">Amorphotheca resinae</name>
    <name type="common">Creosote fungus</name>
    <name type="synonym">Hormoconis resinae</name>
    <dbReference type="NCBI Taxonomy" id="5101"/>
    <lineage>
        <taxon>Eukaryota</taxon>
        <taxon>Fungi</taxon>
        <taxon>Dikarya</taxon>
        <taxon>Ascomycota</taxon>
        <taxon>Pezizomycotina</taxon>
        <taxon>Leotiomycetes</taxon>
        <taxon>Helotiales</taxon>
        <taxon>Amorphothecaceae</taxon>
        <taxon>Amorphotheca</taxon>
    </lineage>
</organism>
<reference key="1">
    <citation type="journal article" date="1992" name="FEMS Microbiol. Lett.">
        <title>Glucoamylase P gene of Hormoconis resinae: molecular cloning, sequencing and introduction into Trichoderma reesei.</title>
        <authorList>
            <person name="Joutsjoki V.V."/>
            <person name="Torkkeli T.K."/>
        </authorList>
    </citation>
    <scope>NUCLEOTIDE SEQUENCE [GENOMIC DNA]</scope>
    <source>
        <strain>ATCC 20495 / CBS 174.61 / NRRL 6437</strain>
    </source>
</reference>
<reference key="2">
    <citation type="journal article" date="1993" name="Curr. Genet.">
        <title>Cloning and expression of Hormoconis resinae glucoamylase P cDNA in Saccharomyces cerevisiae.</title>
        <authorList>
            <person name="Vainio A.E.I."/>
            <person name="Torkkeli H.T."/>
            <person name="Tuusa T."/>
            <person name="Aho S.A."/>
            <person name="Fagerstroem B.R."/>
            <person name="Korhola M.P."/>
        </authorList>
    </citation>
    <scope>NUCLEOTIDE SEQUENCE [MRNA]</scope>
    <source>
        <strain>ATCC 20495 / CBS 174.61 / NRRL 6437</strain>
    </source>
</reference>
<reference key="3">
    <citation type="journal article" date="1990" name="J. Gen. Microbiol.">
        <title>Comparison of two glucoamylases from Hormoconis resinae.</title>
        <authorList>
            <person name="Fagerstroem R."/>
            <person name="Vainio A.E.I."/>
            <person name="Suoranta K."/>
            <person name="Pakula T."/>
            <person name="Kalkkinen N."/>
            <person name="Torkkeli H.T."/>
        </authorList>
    </citation>
    <scope>PROTEIN SEQUENCE OF 72-76</scope>
    <scope>CHARACTERIZATION</scope>
</reference>
<gene>
    <name type="primary">GAMP</name>
</gene>
<protein>
    <recommendedName>
        <fullName>Glucoamylase P</fullName>
        <ecNumber>3.2.1.3</ecNumber>
    </recommendedName>
    <alternativeName>
        <fullName>1,4-alpha-D-glucan glucohydrolase</fullName>
    </alternativeName>
    <alternativeName>
        <fullName>Glucan 1,4-alpha-glucosidase</fullName>
    </alternativeName>
</protein>
<comment type="catalytic activity">
    <reaction>
        <text>Hydrolysis of terminal (1-&gt;4)-linked alpha-D-glucose residues successively from non-reducing ends of the chains with release of beta-D-glucose.</text>
        <dbReference type="EC" id="3.2.1.3"/>
    </reaction>
</comment>
<comment type="subcellular location">
    <subcellularLocation>
        <location>Secreted</location>
    </subcellularLocation>
</comment>
<comment type="similarity">
    <text evidence="4">Belongs to the glycosyl hydrolase 15 family.</text>
</comment>
<evidence type="ECO:0000250" key="1"/>
<evidence type="ECO:0000255" key="2"/>
<evidence type="ECO:0000255" key="3">
    <source>
        <dbReference type="PROSITE-ProRule" id="PRU00594"/>
    </source>
</evidence>
<evidence type="ECO:0000305" key="4"/>
<dbReference type="EC" id="3.2.1.3"/>
<dbReference type="EMBL" id="X68143">
    <property type="protein sequence ID" value="CAA48243.1"/>
    <property type="molecule type" value="Genomic_DNA"/>
</dbReference>
<dbReference type="EMBL" id="X67708">
    <property type="protein sequence ID" value="CAA47945.1"/>
    <property type="molecule type" value="mRNA"/>
</dbReference>
<dbReference type="PIR" id="S33908">
    <property type="entry name" value="S33908"/>
</dbReference>
<dbReference type="PDB" id="6FHW">
    <property type="method" value="X-ray"/>
    <property type="resolution" value="3.60 A"/>
    <property type="chains" value="A/B=1-616"/>
</dbReference>
<dbReference type="PDBsum" id="6FHW"/>
<dbReference type="SMR" id="Q03045"/>
<dbReference type="CAZy" id="CBM20">
    <property type="family name" value="Carbohydrate-Binding Module Family 20"/>
</dbReference>
<dbReference type="CAZy" id="GH15">
    <property type="family name" value="Glycoside Hydrolase Family 15"/>
</dbReference>
<dbReference type="GlyCosmos" id="Q03045">
    <property type="glycosylation" value="2 sites, No reported glycans"/>
</dbReference>
<dbReference type="BRENDA" id="3.2.1.3">
    <property type="organism ID" value="1433"/>
</dbReference>
<dbReference type="GO" id="GO:0005576">
    <property type="term" value="C:extracellular region"/>
    <property type="evidence" value="ECO:0007669"/>
    <property type="project" value="UniProtKB-SubCell"/>
</dbReference>
<dbReference type="GO" id="GO:0000324">
    <property type="term" value="C:fungal-type vacuole"/>
    <property type="evidence" value="ECO:0007669"/>
    <property type="project" value="TreeGrafter"/>
</dbReference>
<dbReference type="GO" id="GO:0004339">
    <property type="term" value="F:glucan 1,4-alpha-glucosidase activity"/>
    <property type="evidence" value="ECO:0007669"/>
    <property type="project" value="UniProtKB-EC"/>
</dbReference>
<dbReference type="GO" id="GO:2001070">
    <property type="term" value="F:starch binding"/>
    <property type="evidence" value="ECO:0007669"/>
    <property type="project" value="InterPro"/>
</dbReference>
<dbReference type="GO" id="GO:0000272">
    <property type="term" value="P:polysaccharide catabolic process"/>
    <property type="evidence" value="ECO:0007669"/>
    <property type="project" value="UniProtKB-KW"/>
</dbReference>
<dbReference type="CDD" id="cd05811">
    <property type="entry name" value="CBM20_glucoamylase"/>
    <property type="match status" value="1"/>
</dbReference>
<dbReference type="FunFam" id="1.50.10.10:FF:000018">
    <property type="entry name" value="Glucoamylase"/>
    <property type="match status" value="1"/>
</dbReference>
<dbReference type="Gene3D" id="1.50.10.10">
    <property type="match status" value="1"/>
</dbReference>
<dbReference type="Gene3D" id="2.60.40.10">
    <property type="entry name" value="Immunoglobulins"/>
    <property type="match status" value="1"/>
</dbReference>
<dbReference type="InterPro" id="IPR008928">
    <property type="entry name" value="6-hairpin_glycosidase_sf"/>
</dbReference>
<dbReference type="InterPro" id="IPR012341">
    <property type="entry name" value="6hp_glycosidase-like_sf"/>
</dbReference>
<dbReference type="InterPro" id="IPR013784">
    <property type="entry name" value="Carb-bd-like_fold"/>
</dbReference>
<dbReference type="InterPro" id="IPR002044">
    <property type="entry name" value="CBM20"/>
</dbReference>
<dbReference type="InterPro" id="IPR034836">
    <property type="entry name" value="CBM20_glucoamylase"/>
</dbReference>
<dbReference type="InterPro" id="IPR011613">
    <property type="entry name" value="GH15-like"/>
</dbReference>
<dbReference type="InterPro" id="IPR000165">
    <property type="entry name" value="Glucoamylase"/>
</dbReference>
<dbReference type="InterPro" id="IPR008291">
    <property type="entry name" value="Glucoamylase_SBD"/>
</dbReference>
<dbReference type="InterPro" id="IPR013783">
    <property type="entry name" value="Ig-like_fold"/>
</dbReference>
<dbReference type="PANTHER" id="PTHR31616:SF12">
    <property type="entry name" value="GLUCOAMYLASE"/>
    <property type="match status" value="1"/>
</dbReference>
<dbReference type="PANTHER" id="PTHR31616">
    <property type="entry name" value="TREHALASE"/>
    <property type="match status" value="1"/>
</dbReference>
<dbReference type="Pfam" id="PF00686">
    <property type="entry name" value="CBM_20"/>
    <property type="match status" value="1"/>
</dbReference>
<dbReference type="Pfam" id="PF00723">
    <property type="entry name" value="Glyco_hydro_15"/>
    <property type="match status" value="1"/>
</dbReference>
<dbReference type="PIRSF" id="PIRSF001031">
    <property type="entry name" value="Glu-a-glcsd_SBD"/>
    <property type="match status" value="1"/>
</dbReference>
<dbReference type="PRINTS" id="PR00736">
    <property type="entry name" value="GLHYDRLASE15"/>
</dbReference>
<dbReference type="SMART" id="SM01065">
    <property type="entry name" value="CBM_2"/>
    <property type="match status" value="1"/>
</dbReference>
<dbReference type="SUPFAM" id="SSF48208">
    <property type="entry name" value="Six-hairpin glycosidases"/>
    <property type="match status" value="1"/>
</dbReference>
<dbReference type="SUPFAM" id="SSF49452">
    <property type="entry name" value="Starch-binding domain-like"/>
    <property type="match status" value="1"/>
</dbReference>
<dbReference type="PROSITE" id="PS51166">
    <property type="entry name" value="CBM20"/>
    <property type="match status" value="1"/>
</dbReference>